<reference key="1">
    <citation type="submission" date="2005-08" db="EMBL/GenBank/DDBJ databases">
        <title>Complete sequence of chromosome 1 of Nitrosospira multiformis ATCC 25196.</title>
        <authorList>
            <person name="Copeland A."/>
            <person name="Lucas S."/>
            <person name="Lapidus A."/>
            <person name="Barry K."/>
            <person name="Detter J.C."/>
            <person name="Glavina T."/>
            <person name="Hammon N."/>
            <person name="Israni S."/>
            <person name="Pitluck S."/>
            <person name="Chain P."/>
            <person name="Malfatti S."/>
            <person name="Shin M."/>
            <person name="Vergez L."/>
            <person name="Schmutz J."/>
            <person name="Larimer F."/>
            <person name="Land M."/>
            <person name="Hauser L."/>
            <person name="Kyrpides N."/>
            <person name="Lykidis A."/>
            <person name="Richardson P."/>
        </authorList>
    </citation>
    <scope>NUCLEOTIDE SEQUENCE [LARGE SCALE GENOMIC DNA]</scope>
    <source>
        <strain>ATCC 25196 / NCIMB 11849 / C 71</strain>
    </source>
</reference>
<organism>
    <name type="scientific">Nitrosospira multiformis (strain ATCC 25196 / NCIMB 11849 / C 71)</name>
    <dbReference type="NCBI Taxonomy" id="323848"/>
    <lineage>
        <taxon>Bacteria</taxon>
        <taxon>Pseudomonadati</taxon>
        <taxon>Pseudomonadota</taxon>
        <taxon>Betaproteobacteria</taxon>
        <taxon>Nitrosomonadales</taxon>
        <taxon>Nitrosomonadaceae</taxon>
        <taxon>Nitrosospira</taxon>
    </lineage>
</organism>
<dbReference type="EC" id="6.1.1.23" evidence="1"/>
<dbReference type="EMBL" id="CP000103">
    <property type="protein sequence ID" value="ABB73910.1"/>
    <property type="molecule type" value="Genomic_DNA"/>
</dbReference>
<dbReference type="RefSeq" id="WP_011379961.1">
    <property type="nucleotide sequence ID" value="NC_007614.1"/>
</dbReference>
<dbReference type="SMR" id="Q2YBG1"/>
<dbReference type="STRING" id="323848.Nmul_A0603"/>
<dbReference type="KEGG" id="nmu:Nmul_A0603"/>
<dbReference type="eggNOG" id="COG0173">
    <property type="taxonomic scope" value="Bacteria"/>
</dbReference>
<dbReference type="HOGENOM" id="CLU_014330_3_2_4"/>
<dbReference type="OrthoDB" id="9802326at2"/>
<dbReference type="Proteomes" id="UP000002718">
    <property type="component" value="Chromosome"/>
</dbReference>
<dbReference type="GO" id="GO:0005737">
    <property type="term" value="C:cytoplasm"/>
    <property type="evidence" value="ECO:0007669"/>
    <property type="project" value="UniProtKB-SubCell"/>
</dbReference>
<dbReference type="GO" id="GO:0004815">
    <property type="term" value="F:aspartate-tRNA ligase activity"/>
    <property type="evidence" value="ECO:0007669"/>
    <property type="project" value="UniProtKB-UniRule"/>
</dbReference>
<dbReference type="GO" id="GO:0050560">
    <property type="term" value="F:aspartate-tRNA(Asn) ligase activity"/>
    <property type="evidence" value="ECO:0007669"/>
    <property type="project" value="UniProtKB-EC"/>
</dbReference>
<dbReference type="GO" id="GO:0005524">
    <property type="term" value="F:ATP binding"/>
    <property type="evidence" value="ECO:0007669"/>
    <property type="project" value="UniProtKB-UniRule"/>
</dbReference>
<dbReference type="GO" id="GO:0003676">
    <property type="term" value="F:nucleic acid binding"/>
    <property type="evidence" value="ECO:0007669"/>
    <property type="project" value="InterPro"/>
</dbReference>
<dbReference type="GO" id="GO:0006422">
    <property type="term" value="P:aspartyl-tRNA aminoacylation"/>
    <property type="evidence" value="ECO:0007669"/>
    <property type="project" value="UniProtKB-UniRule"/>
</dbReference>
<dbReference type="CDD" id="cd00777">
    <property type="entry name" value="AspRS_core"/>
    <property type="match status" value="1"/>
</dbReference>
<dbReference type="CDD" id="cd04317">
    <property type="entry name" value="EcAspRS_like_N"/>
    <property type="match status" value="1"/>
</dbReference>
<dbReference type="Gene3D" id="3.30.930.10">
    <property type="entry name" value="Bira Bifunctional Protein, Domain 2"/>
    <property type="match status" value="1"/>
</dbReference>
<dbReference type="Gene3D" id="3.30.1360.30">
    <property type="entry name" value="GAD-like domain"/>
    <property type="match status" value="1"/>
</dbReference>
<dbReference type="Gene3D" id="2.40.50.140">
    <property type="entry name" value="Nucleic acid-binding proteins"/>
    <property type="match status" value="1"/>
</dbReference>
<dbReference type="HAMAP" id="MF_00044">
    <property type="entry name" value="Asp_tRNA_synth_type1"/>
    <property type="match status" value="1"/>
</dbReference>
<dbReference type="InterPro" id="IPR004364">
    <property type="entry name" value="Aa-tRNA-synt_II"/>
</dbReference>
<dbReference type="InterPro" id="IPR006195">
    <property type="entry name" value="aa-tRNA-synth_II"/>
</dbReference>
<dbReference type="InterPro" id="IPR045864">
    <property type="entry name" value="aa-tRNA-synth_II/BPL/LPL"/>
</dbReference>
<dbReference type="InterPro" id="IPR004524">
    <property type="entry name" value="Asp-tRNA-ligase_1"/>
</dbReference>
<dbReference type="InterPro" id="IPR047089">
    <property type="entry name" value="Asp-tRNA-ligase_1_N"/>
</dbReference>
<dbReference type="InterPro" id="IPR002312">
    <property type="entry name" value="Asp/Asn-tRNA-synth_IIb"/>
</dbReference>
<dbReference type="InterPro" id="IPR047090">
    <property type="entry name" value="AspRS_core"/>
</dbReference>
<dbReference type="InterPro" id="IPR004115">
    <property type="entry name" value="GAD-like_sf"/>
</dbReference>
<dbReference type="InterPro" id="IPR029351">
    <property type="entry name" value="GAD_dom"/>
</dbReference>
<dbReference type="InterPro" id="IPR012340">
    <property type="entry name" value="NA-bd_OB-fold"/>
</dbReference>
<dbReference type="InterPro" id="IPR004365">
    <property type="entry name" value="NA-bd_OB_tRNA"/>
</dbReference>
<dbReference type="NCBIfam" id="TIGR00459">
    <property type="entry name" value="aspS_bact"/>
    <property type="match status" value="1"/>
</dbReference>
<dbReference type="NCBIfam" id="NF001750">
    <property type="entry name" value="PRK00476.1"/>
    <property type="match status" value="1"/>
</dbReference>
<dbReference type="PANTHER" id="PTHR22594:SF5">
    <property type="entry name" value="ASPARTATE--TRNA LIGASE, MITOCHONDRIAL"/>
    <property type="match status" value="1"/>
</dbReference>
<dbReference type="PANTHER" id="PTHR22594">
    <property type="entry name" value="ASPARTYL/LYSYL-TRNA SYNTHETASE"/>
    <property type="match status" value="1"/>
</dbReference>
<dbReference type="Pfam" id="PF02938">
    <property type="entry name" value="GAD"/>
    <property type="match status" value="1"/>
</dbReference>
<dbReference type="Pfam" id="PF00152">
    <property type="entry name" value="tRNA-synt_2"/>
    <property type="match status" value="1"/>
</dbReference>
<dbReference type="Pfam" id="PF01336">
    <property type="entry name" value="tRNA_anti-codon"/>
    <property type="match status" value="1"/>
</dbReference>
<dbReference type="PRINTS" id="PR01042">
    <property type="entry name" value="TRNASYNTHASP"/>
</dbReference>
<dbReference type="SUPFAM" id="SSF55681">
    <property type="entry name" value="Class II aaRS and biotin synthetases"/>
    <property type="match status" value="1"/>
</dbReference>
<dbReference type="SUPFAM" id="SSF55261">
    <property type="entry name" value="GAD domain-like"/>
    <property type="match status" value="1"/>
</dbReference>
<dbReference type="SUPFAM" id="SSF50249">
    <property type="entry name" value="Nucleic acid-binding proteins"/>
    <property type="match status" value="1"/>
</dbReference>
<dbReference type="PROSITE" id="PS50862">
    <property type="entry name" value="AA_TRNA_LIGASE_II"/>
    <property type="match status" value="1"/>
</dbReference>
<keyword id="KW-0030">Aminoacyl-tRNA synthetase</keyword>
<keyword id="KW-0067">ATP-binding</keyword>
<keyword id="KW-0963">Cytoplasm</keyword>
<keyword id="KW-0436">Ligase</keyword>
<keyword id="KW-0547">Nucleotide-binding</keyword>
<keyword id="KW-0648">Protein biosynthesis</keyword>
<keyword id="KW-1185">Reference proteome</keyword>
<evidence type="ECO:0000255" key="1">
    <source>
        <dbReference type="HAMAP-Rule" id="MF_00044"/>
    </source>
</evidence>
<gene>
    <name evidence="1" type="primary">aspS</name>
    <name type="ordered locus">Nmul_A0603</name>
</gene>
<name>SYDND_NITMU</name>
<comment type="function">
    <text evidence="1">Aspartyl-tRNA synthetase with relaxed tRNA specificity since it is able to aspartylate not only its cognate tRNA(Asp) but also tRNA(Asn). Reaction proceeds in two steps: L-aspartate is first activated by ATP to form Asp-AMP and then transferred to the acceptor end of tRNA(Asp/Asn).</text>
</comment>
<comment type="catalytic activity">
    <reaction evidence="1">
        <text>tRNA(Asx) + L-aspartate + ATP = L-aspartyl-tRNA(Asx) + AMP + diphosphate</text>
        <dbReference type="Rhea" id="RHEA:18349"/>
        <dbReference type="Rhea" id="RHEA-COMP:9710"/>
        <dbReference type="Rhea" id="RHEA-COMP:9711"/>
        <dbReference type="ChEBI" id="CHEBI:29991"/>
        <dbReference type="ChEBI" id="CHEBI:30616"/>
        <dbReference type="ChEBI" id="CHEBI:33019"/>
        <dbReference type="ChEBI" id="CHEBI:78442"/>
        <dbReference type="ChEBI" id="CHEBI:78516"/>
        <dbReference type="ChEBI" id="CHEBI:456215"/>
        <dbReference type="EC" id="6.1.1.23"/>
    </reaction>
</comment>
<comment type="subunit">
    <text evidence="1">Homodimer.</text>
</comment>
<comment type="subcellular location">
    <subcellularLocation>
        <location evidence="1">Cytoplasm</location>
    </subcellularLocation>
</comment>
<comment type="similarity">
    <text evidence="1">Belongs to the class-II aminoacyl-tRNA synthetase family. Type 1 subfamily.</text>
</comment>
<accession>Q2YBG1</accession>
<feature type="chain" id="PRO_0000235537" description="Aspartate--tRNA(Asp/Asn) ligase">
    <location>
        <begin position="1"/>
        <end position="588"/>
    </location>
</feature>
<feature type="region of interest" description="Aspartate" evidence="1">
    <location>
        <begin position="196"/>
        <end position="199"/>
    </location>
</feature>
<feature type="binding site" evidence="1">
    <location>
        <position position="172"/>
    </location>
    <ligand>
        <name>L-aspartate</name>
        <dbReference type="ChEBI" id="CHEBI:29991"/>
    </ligand>
</feature>
<feature type="binding site" evidence="1">
    <location>
        <begin position="218"/>
        <end position="220"/>
    </location>
    <ligand>
        <name>ATP</name>
        <dbReference type="ChEBI" id="CHEBI:30616"/>
    </ligand>
</feature>
<feature type="binding site" evidence="1">
    <location>
        <position position="218"/>
    </location>
    <ligand>
        <name>L-aspartate</name>
        <dbReference type="ChEBI" id="CHEBI:29991"/>
    </ligand>
</feature>
<feature type="binding site" evidence="1">
    <location>
        <position position="227"/>
    </location>
    <ligand>
        <name>ATP</name>
        <dbReference type="ChEBI" id="CHEBI:30616"/>
    </ligand>
</feature>
<feature type="binding site" evidence="1">
    <location>
        <position position="450"/>
    </location>
    <ligand>
        <name>L-aspartate</name>
        <dbReference type="ChEBI" id="CHEBI:29991"/>
    </ligand>
</feature>
<feature type="binding site" evidence="1">
    <location>
        <position position="484"/>
    </location>
    <ligand>
        <name>ATP</name>
        <dbReference type="ChEBI" id="CHEBI:30616"/>
    </ligand>
</feature>
<feature type="binding site" evidence="1">
    <location>
        <position position="491"/>
    </location>
    <ligand>
        <name>L-aspartate</name>
        <dbReference type="ChEBI" id="CHEBI:29991"/>
    </ligand>
</feature>
<feature type="binding site" evidence="1">
    <location>
        <begin position="536"/>
        <end position="539"/>
    </location>
    <ligand>
        <name>ATP</name>
        <dbReference type="ChEBI" id="CHEBI:30616"/>
    </ligand>
</feature>
<feature type="site" description="Important for tRNA non-discrimination" evidence="1">
    <location>
        <position position="30"/>
    </location>
</feature>
<feature type="site" description="Important for tRNA non-discrimination" evidence="1">
    <location>
        <position position="81"/>
    </location>
</feature>
<proteinExistence type="inferred from homology"/>
<protein>
    <recommendedName>
        <fullName evidence="1">Aspartate--tRNA(Asp/Asn) ligase</fullName>
        <ecNumber evidence="1">6.1.1.23</ecNumber>
    </recommendedName>
    <alternativeName>
        <fullName evidence="1">Aspartyl-tRNA synthetase</fullName>
        <shortName evidence="1">AspRS</shortName>
    </alternativeName>
    <alternativeName>
        <fullName evidence="1">Non-discriminating aspartyl-tRNA synthetase</fullName>
        <shortName evidence="1">ND-AspRS</shortName>
    </alternativeName>
</protein>
<sequence length="588" mass="66318">MRTNYCGLIDVQYLDQTVILYGWVHRRRDHGGVIFVDLRDREGLVQVVCDPDNPTAFQVAEKIRNEFVVRITGRVRHRPPGTVNPNLISGEIEVLVSSIDILNASLTPPFLMDDESLSEATRLEHRYLDLRRPQMQENLRLRYKVAMAVRLFLDQHGFIDVETPMLTKSTPEGARDYLVPSRVNTGHFFALPQSPQLFKQLLMVSGFDRYYQITKCFRDEDLRADRQPEFTQIDIETSFLNESQIMQMMERMICTVFKSVRNIDLPTPFPRLTHGEAMSKYGSDKPDMRVSLVLTELTDVMQEVEFKVFREAALRTGGRVAALRVPGGGALSRKEIDDYTGFVAIYGAKGLAYIKVNALEKGMDGLQSPILKFLPENVIQIVLERTGAKDGDLIFFGADKAQVVNEALGALRAKVGHDRGLAESGWKPLWVVDFPMFERDEEENRWKALHHPFTSPAEGHEDLLETDPEKALSKAYDMVLNGSEIGGGSVRIHRQEVQSKVFRALNIGADEANEKFGFLLEALQYGAPPHGGIAFGLDRIVAMMAGAESIREVIAFPKTQRAQCLLTHAPSTVGEKQLRELHIKLRHA</sequence>